<protein>
    <recommendedName>
        <fullName evidence="1">Ribosomal RNA small subunit methyltransferase H</fullName>
        <ecNumber evidence="1">2.1.1.199</ecNumber>
    </recommendedName>
    <alternativeName>
        <fullName evidence="1">16S rRNA m(4)C1402 methyltransferase</fullName>
    </alternativeName>
    <alternativeName>
        <fullName evidence="1">rRNA (cytosine-N(4)-)-methyltransferase RsmH</fullName>
    </alternativeName>
</protein>
<reference key="1">
    <citation type="journal article" date="2011" name="Stand. Genomic Sci.">
        <title>Complete genome sequence of 'Thioalkalivibrio sulfidophilus' HL-EbGr7.</title>
        <authorList>
            <person name="Muyzer G."/>
            <person name="Sorokin D.Y."/>
            <person name="Mavromatis K."/>
            <person name="Lapidus A."/>
            <person name="Clum A."/>
            <person name="Ivanova N."/>
            <person name="Pati A."/>
            <person name="d'Haeseleer P."/>
            <person name="Woyke T."/>
            <person name="Kyrpides N.C."/>
        </authorList>
    </citation>
    <scope>NUCLEOTIDE SEQUENCE [LARGE SCALE GENOMIC DNA]</scope>
    <source>
        <strain>HL-EbGR7</strain>
    </source>
</reference>
<sequence>MSGKPAPAHRAVLLEEAVEALAVRPDGIYLDGTFGRGGHSGRILERLGPDGRLIALDRDPEAEAEAARRFGDDERFHFERCSFEMLQQVTDRLGISGRLDGVLLDLGVSSPQLDTPERGFSFMSDGPLDMRMDPESGESAAAWLARANEDEIAWVLKEYGEERFARRIARRIVETRQEMPLERTRQLAELIAEAVPFKERHKHPATRSFQAIRIRVNDELETLPRCLEQIPALLAPGGRLAVISFHSLEDRMVKRFLRDQAEGERLPRGLPVQGDARRGQTLRLVGRAIRAGEAELDQNPRARSAVLRVAERLA</sequence>
<organism>
    <name type="scientific">Thioalkalivibrio sulfidiphilus (strain HL-EbGR7)</name>
    <dbReference type="NCBI Taxonomy" id="396588"/>
    <lineage>
        <taxon>Bacteria</taxon>
        <taxon>Pseudomonadati</taxon>
        <taxon>Pseudomonadota</taxon>
        <taxon>Gammaproteobacteria</taxon>
        <taxon>Chromatiales</taxon>
        <taxon>Ectothiorhodospiraceae</taxon>
        <taxon>Thioalkalivibrio</taxon>
    </lineage>
</organism>
<evidence type="ECO:0000255" key="1">
    <source>
        <dbReference type="HAMAP-Rule" id="MF_01007"/>
    </source>
</evidence>
<feature type="chain" id="PRO_0000387197" description="Ribosomal RNA small subunit methyltransferase H">
    <location>
        <begin position="1"/>
        <end position="314"/>
    </location>
</feature>
<feature type="binding site" evidence="1">
    <location>
        <begin position="37"/>
        <end position="39"/>
    </location>
    <ligand>
        <name>S-adenosyl-L-methionine</name>
        <dbReference type="ChEBI" id="CHEBI:59789"/>
    </ligand>
</feature>
<feature type="binding site" evidence="1">
    <location>
        <position position="57"/>
    </location>
    <ligand>
        <name>S-adenosyl-L-methionine</name>
        <dbReference type="ChEBI" id="CHEBI:59789"/>
    </ligand>
</feature>
<feature type="binding site" evidence="1">
    <location>
        <position position="83"/>
    </location>
    <ligand>
        <name>S-adenosyl-L-methionine</name>
        <dbReference type="ChEBI" id="CHEBI:59789"/>
    </ligand>
</feature>
<feature type="binding site" evidence="1">
    <location>
        <position position="105"/>
    </location>
    <ligand>
        <name>S-adenosyl-L-methionine</name>
        <dbReference type="ChEBI" id="CHEBI:59789"/>
    </ligand>
</feature>
<feature type="binding site" evidence="1">
    <location>
        <position position="112"/>
    </location>
    <ligand>
        <name>S-adenosyl-L-methionine</name>
        <dbReference type="ChEBI" id="CHEBI:59789"/>
    </ligand>
</feature>
<proteinExistence type="inferred from homology"/>
<comment type="function">
    <text evidence="1">Specifically methylates the N4 position of cytidine in position 1402 (C1402) of 16S rRNA.</text>
</comment>
<comment type="catalytic activity">
    <reaction evidence="1">
        <text>cytidine(1402) in 16S rRNA + S-adenosyl-L-methionine = N(4)-methylcytidine(1402) in 16S rRNA + S-adenosyl-L-homocysteine + H(+)</text>
        <dbReference type="Rhea" id="RHEA:42928"/>
        <dbReference type="Rhea" id="RHEA-COMP:10286"/>
        <dbReference type="Rhea" id="RHEA-COMP:10287"/>
        <dbReference type="ChEBI" id="CHEBI:15378"/>
        <dbReference type="ChEBI" id="CHEBI:57856"/>
        <dbReference type="ChEBI" id="CHEBI:59789"/>
        <dbReference type="ChEBI" id="CHEBI:74506"/>
        <dbReference type="ChEBI" id="CHEBI:82748"/>
        <dbReference type="EC" id="2.1.1.199"/>
    </reaction>
</comment>
<comment type="subcellular location">
    <subcellularLocation>
        <location evidence="1">Cytoplasm</location>
    </subcellularLocation>
</comment>
<comment type="similarity">
    <text evidence="1">Belongs to the methyltransferase superfamily. RsmH family.</text>
</comment>
<gene>
    <name evidence="1" type="primary">rsmH</name>
    <name type="synonym">mraW</name>
    <name type="ordered locus">Tgr7_0761</name>
</gene>
<name>RSMH_THISH</name>
<keyword id="KW-0963">Cytoplasm</keyword>
<keyword id="KW-0489">Methyltransferase</keyword>
<keyword id="KW-1185">Reference proteome</keyword>
<keyword id="KW-0698">rRNA processing</keyword>
<keyword id="KW-0949">S-adenosyl-L-methionine</keyword>
<keyword id="KW-0808">Transferase</keyword>
<accession>B8GMM1</accession>
<dbReference type="EC" id="2.1.1.199" evidence="1"/>
<dbReference type="EMBL" id="CP001339">
    <property type="protein sequence ID" value="ACL71853.1"/>
    <property type="molecule type" value="Genomic_DNA"/>
</dbReference>
<dbReference type="RefSeq" id="WP_012637341.1">
    <property type="nucleotide sequence ID" value="NC_011901.1"/>
</dbReference>
<dbReference type="SMR" id="B8GMM1"/>
<dbReference type="STRING" id="396588.Tgr7_0761"/>
<dbReference type="KEGG" id="tgr:Tgr7_0761"/>
<dbReference type="eggNOG" id="COG0275">
    <property type="taxonomic scope" value="Bacteria"/>
</dbReference>
<dbReference type="HOGENOM" id="CLU_038422_2_0_6"/>
<dbReference type="OrthoDB" id="9806637at2"/>
<dbReference type="Proteomes" id="UP000002383">
    <property type="component" value="Chromosome"/>
</dbReference>
<dbReference type="GO" id="GO:0005737">
    <property type="term" value="C:cytoplasm"/>
    <property type="evidence" value="ECO:0007669"/>
    <property type="project" value="UniProtKB-SubCell"/>
</dbReference>
<dbReference type="GO" id="GO:0071424">
    <property type="term" value="F:rRNA (cytosine-N4-)-methyltransferase activity"/>
    <property type="evidence" value="ECO:0007669"/>
    <property type="project" value="UniProtKB-UniRule"/>
</dbReference>
<dbReference type="GO" id="GO:0070475">
    <property type="term" value="P:rRNA base methylation"/>
    <property type="evidence" value="ECO:0007669"/>
    <property type="project" value="UniProtKB-UniRule"/>
</dbReference>
<dbReference type="FunFam" id="1.10.150.170:FF:000001">
    <property type="entry name" value="Ribosomal RNA small subunit methyltransferase H"/>
    <property type="match status" value="1"/>
</dbReference>
<dbReference type="Gene3D" id="1.10.150.170">
    <property type="entry name" value="Putative methyltransferase TM0872, insert domain"/>
    <property type="match status" value="1"/>
</dbReference>
<dbReference type="Gene3D" id="3.40.50.150">
    <property type="entry name" value="Vaccinia Virus protein VP39"/>
    <property type="match status" value="1"/>
</dbReference>
<dbReference type="HAMAP" id="MF_01007">
    <property type="entry name" value="16SrRNA_methyltr_H"/>
    <property type="match status" value="1"/>
</dbReference>
<dbReference type="InterPro" id="IPR002903">
    <property type="entry name" value="RsmH"/>
</dbReference>
<dbReference type="InterPro" id="IPR023397">
    <property type="entry name" value="SAM-dep_MeTrfase_MraW_recog"/>
</dbReference>
<dbReference type="InterPro" id="IPR029063">
    <property type="entry name" value="SAM-dependent_MTases_sf"/>
</dbReference>
<dbReference type="NCBIfam" id="TIGR00006">
    <property type="entry name" value="16S rRNA (cytosine(1402)-N(4))-methyltransferase RsmH"/>
    <property type="match status" value="1"/>
</dbReference>
<dbReference type="PANTHER" id="PTHR11265:SF0">
    <property type="entry name" value="12S RRNA N4-METHYLCYTIDINE METHYLTRANSFERASE"/>
    <property type="match status" value="1"/>
</dbReference>
<dbReference type="PANTHER" id="PTHR11265">
    <property type="entry name" value="S-ADENOSYL-METHYLTRANSFERASE MRAW"/>
    <property type="match status" value="1"/>
</dbReference>
<dbReference type="Pfam" id="PF01795">
    <property type="entry name" value="Methyltransf_5"/>
    <property type="match status" value="1"/>
</dbReference>
<dbReference type="PIRSF" id="PIRSF004486">
    <property type="entry name" value="MraW"/>
    <property type="match status" value="1"/>
</dbReference>
<dbReference type="SUPFAM" id="SSF81799">
    <property type="entry name" value="Putative methyltransferase TM0872, insert domain"/>
    <property type="match status" value="1"/>
</dbReference>
<dbReference type="SUPFAM" id="SSF53335">
    <property type="entry name" value="S-adenosyl-L-methionine-dependent methyltransferases"/>
    <property type="match status" value="1"/>
</dbReference>